<protein>
    <recommendedName>
        <fullName>Tyrosine--tRNA ligase</fullName>
        <ecNumber>6.1.1.1</ecNumber>
    </recommendedName>
    <alternativeName>
        <fullName>Tyrosyl-tRNA synthetase</fullName>
        <shortName>TyrRS</shortName>
    </alternativeName>
</protein>
<keyword id="KW-0002">3D-structure</keyword>
<keyword id="KW-0030">Aminoacyl-tRNA synthetase</keyword>
<keyword id="KW-0067">ATP-binding</keyword>
<keyword id="KW-0436">Ligase</keyword>
<keyword id="KW-0547">Nucleotide-binding</keyword>
<keyword id="KW-0648">Protein biosynthesis</keyword>
<keyword id="KW-1185">Reference proteome</keyword>
<evidence type="ECO:0000250" key="1"/>
<evidence type="ECO:0000269" key="2">
    <source>
    </source>
</evidence>
<evidence type="ECO:0000269" key="3">
    <source>
    </source>
</evidence>
<evidence type="ECO:0000269" key="4">
    <source>
    </source>
</evidence>
<evidence type="ECO:0000305" key="5"/>
<evidence type="ECO:0007829" key="6">
    <source>
        <dbReference type="PDB" id="2J5B"/>
    </source>
</evidence>
<gene>
    <name type="primary">YARS</name>
    <name type="ordered locus">MIMI_L124</name>
</gene>
<dbReference type="EC" id="6.1.1.1"/>
<dbReference type="EMBL" id="AY653733">
    <property type="protein sequence ID" value="AAV50399.1"/>
    <property type="molecule type" value="Genomic_DNA"/>
</dbReference>
<dbReference type="PDB" id="2J5B">
    <property type="method" value="X-ray"/>
    <property type="resolution" value="2.20 A"/>
    <property type="chains" value="A/B=2-346"/>
</dbReference>
<dbReference type="PDBsum" id="2J5B"/>
<dbReference type="SMR" id="Q5UPJ7"/>
<dbReference type="MINT" id="Q5UPJ7"/>
<dbReference type="DrugBank" id="DB03978">
    <property type="generic name" value="Tyrosinal"/>
</dbReference>
<dbReference type="KEGG" id="vg:9924723"/>
<dbReference type="OrthoDB" id="7339at10239"/>
<dbReference type="BRENDA" id="6.1.1.1">
    <property type="organism ID" value="9231"/>
</dbReference>
<dbReference type="SABIO-RK" id="Q5UPJ7"/>
<dbReference type="EvolutionaryTrace" id="Q5UPJ7"/>
<dbReference type="Proteomes" id="UP000001134">
    <property type="component" value="Genome"/>
</dbReference>
<dbReference type="GO" id="GO:0005524">
    <property type="term" value="F:ATP binding"/>
    <property type="evidence" value="ECO:0000314"/>
    <property type="project" value="CAFA"/>
</dbReference>
<dbReference type="GO" id="GO:0042802">
    <property type="term" value="F:identical protein binding"/>
    <property type="evidence" value="ECO:0000353"/>
    <property type="project" value="IntAct"/>
</dbReference>
<dbReference type="GO" id="GO:0072545">
    <property type="term" value="F:L-tyrosine binding"/>
    <property type="evidence" value="ECO:0000314"/>
    <property type="project" value="CAFA"/>
</dbReference>
<dbReference type="GO" id="GO:0042803">
    <property type="term" value="F:protein homodimerization activity"/>
    <property type="evidence" value="ECO:0000314"/>
    <property type="project" value="CAFA"/>
</dbReference>
<dbReference type="GO" id="GO:0004831">
    <property type="term" value="F:tyrosine-tRNA ligase activity"/>
    <property type="evidence" value="ECO:0000314"/>
    <property type="project" value="CAFA"/>
</dbReference>
<dbReference type="GO" id="GO:0006437">
    <property type="term" value="P:tyrosyl-tRNA aminoacylation"/>
    <property type="evidence" value="ECO:0000314"/>
    <property type="project" value="CAFA"/>
</dbReference>
<dbReference type="FunFam" id="3.40.50.620:FF:000085">
    <property type="entry name" value="Tyrosine--tRNA ligase 1 cytoplasmic"/>
    <property type="match status" value="1"/>
</dbReference>
<dbReference type="Gene3D" id="3.40.50.620">
    <property type="entry name" value="HUPs"/>
    <property type="match status" value="1"/>
</dbReference>
<dbReference type="Gene3D" id="1.10.240.10">
    <property type="entry name" value="Tyrosyl-Transfer RNA Synthetase"/>
    <property type="match status" value="1"/>
</dbReference>
<dbReference type="InterPro" id="IPR002305">
    <property type="entry name" value="aa-tRNA-synth_Ic"/>
</dbReference>
<dbReference type="InterPro" id="IPR014729">
    <property type="entry name" value="Rossmann-like_a/b/a_fold"/>
</dbReference>
<dbReference type="InterPro" id="IPR023617">
    <property type="entry name" value="Tyr-tRNA-ligase_arc/euk-type"/>
</dbReference>
<dbReference type="InterPro" id="IPR050489">
    <property type="entry name" value="Tyr-tRNA_synthase"/>
</dbReference>
<dbReference type="NCBIfam" id="NF006330">
    <property type="entry name" value="PRK08560.1"/>
    <property type="match status" value="1"/>
</dbReference>
<dbReference type="PANTHER" id="PTHR46264:SF4">
    <property type="entry name" value="TYROSINE--TRNA LIGASE, CYTOPLASMIC"/>
    <property type="match status" value="1"/>
</dbReference>
<dbReference type="PANTHER" id="PTHR46264">
    <property type="entry name" value="TYROSINE-TRNA LIGASE"/>
    <property type="match status" value="1"/>
</dbReference>
<dbReference type="Pfam" id="PF00579">
    <property type="entry name" value="tRNA-synt_1b"/>
    <property type="match status" value="1"/>
</dbReference>
<dbReference type="PIRSF" id="PIRSF006588">
    <property type="entry name" value="TyrRS_arch_euk"/>
    <property type="match status" value="1"/>
</dbReference>
<dbReference type="SUPFAM" id="SSF52374">
    <property type="entry name" value="Nucleotidylyl transferase"/>
    <property type="match status" value="1"/>
</dbReference>
<comment type="function">
    <text evidence="1 2 3">Catalyzes the attachment of tyrosine to tRNA(Tyr) in a two-step reaction: tyrosine is first activated by ATP to form Tyr-AMP and then transferred to the acceptor end of tRNA(Tyr).</text>
</comment>
<comment type="catalytic activity">
    <reaction evidence="4">
        <text>tRNA(Tyr) + L-tyrosine + ATP = L-tyrosyl-tRNA(Tyr) + AMP + diphosphate + H(+)</text>
        <dbReference type="Rhea" id="RHEA:10220"/>
        <dbReference type="Rhea" id="RHEA-COMP:9706"/>
        <dbReference type="Rhea" id="RHEA-COMP:9707"/>
        <dbReference type="ChEBI" id="CHEBI:15378"/>
        <dbReference type="ChEBI" id="CHEBI:30616"/>
        <dbReference type="ChEBI" id="CHEBI:33019"/>
        <dbReference type="ChEBI" id="CHEBI:58315"/>
        <dbReference type="ChEBI" id="CHEBI:78442"/>
        <dbReference type="ChEBI" id="CHEBI:78536"/>
        <dbReference type="ChEBI" id="CHEBI:456215"/>
        <dbReference type="EC" id="6.1.1.1"/>
    </reaction>
</comment>
<comment type="biophysicochemical properties">
    <kinetics>
        <KM evidence="4">0.5 uM for tRNA-Tyr</KM>
    </kinetics>
</comment>
<comment type="subunit">
    <text evidence="4">Homodimer.</text>
</comment>
<comment type="interaction">
    <interactant intactId="EBI-8356905">
        <id>Q5UPJ7</id>
    </interactant>
    <interactant intactId="EBI-8356905">
        <id>Q5UPJ7</id>
        <label>YARS</label>
    </interactant>
    <organismsDiffer>false</organismsDiffer>
    <experiments>3</experiments>
</comment>
<comment type="similarity">
    <text evidence="5">Belongs to the class-I aminoacyl-tRNA synthetase family.</text>
</comment>
<feature type="chain" id="PRO_0000055677" description="Tyrosine--tRNA ligase">
    <location>
        <begin position="1"/>
        <end position="346"/>
    </location>
</feature>
<feature type="short sequence motif" description="'HIGH' region">
    <location>
        <begin position="47"/>
        <end position="56"/>
    </location>
</feature>
<feature type="short sequence motif" description="'KMSKS' region">
    <location>
        <begin position="230"/>
        <end position="234"/>
    </location>
</feature>
<feature type="binding site" evidence="1">
    <location>
        <position position="233"/>
    </location>
    <ligand>
        <name>ATP</name>
        <dbReference type="ChEBI" id="CHEBI:30616"/>
    </ligand>
</feature>
<feature type="helix" evidence="6">
    <location>
        <begin position="6"/>
        <end position="17"/>
    </location>
</feature>
<feature type="strand" evidence="6">
    <location>
        <begin position="21"/>
        <end position="24"/>
    </location>
</feature>
<feature type="helix" evidence="6">
    <location>
        <begin position="26"/>
        <end position="35"/>
    </location>
</feature>
<feature type="strand" evidence="6">
    <location>
        <begin position="39"/>
        <end position="45"/>
    </location>
</feature>
<feature type="helix" evidence="6">
    <location>
        <begin position="53"/>
        <end position="68"/>
    </location>
</feature>
<feature type="strand" evidence="6">
    <location>
        <begin position="71"/>
        <end position="77"/>
    </location>
</feature>
<feature type="helix" evidence="6">
    <location>
        <begin position="79"/>
        <end position="84"/>
    </location>
</feature>
<feature type="helix" evidence="6">
    <location>
        <begin position="87"/>
        <end position="90"/>
    </location>
</feature>
<feature type="helix" evidence="6">
    <location>
        <begin position="92"/>
        <end position="108"/>
    </location>
</feature>
<feature type="helix" evidence="6">
    <location>
        <begin position="113"/>
        <end position="115"/>
    </location>
</feature>
<feature type="strand" evidence="6">
    <location>
        <begin position="116"/>
        <end position="120"/>
    </location>
</feature>
<feature type="helix" evidence="6">
    <location>
        <begin position="121"/>
        <end position="127"/>
    </location>
</feature>
<feature type="helix" evidence="6">
    <location>
        <begin position="129"/>
        <end position="147"/>
    </location>
</feature>
<feature type="helix" evidence="6">
    <location>
        <begin position="169"/>
        <end position="179"/>
    </location>
</feature>
<feature type="strand" evidence="6">
    <location>
        <begin position="186"/>
        <end position="188"/>
    </location>
</feature>
<feature type="helix" evidence="6">
    <location>
        <begin position="192"/>
        <end position="194"/>
    </location>
</feature>
<feature type="helix" evidence="6">
    <location>
        <begin position="195"/>
        <end position="207"/>
    </location>
</feature>
<feature type="strand" evidence="6">
    <location>
        <begin position="214"/>
        <end position="218"/>
    </location>
</feature>
<feature type="helix" evidence="6">
    <location>
        <begin position="236"/>
        <end position="238"/>
    </location>
</feature>
<feature type="helix" evidence="6">
    <location>
        <begin position="246"/>
        <end position="255"/>
    </location>
</feature>
<feature type="strand" evidence="6">
    <location>
        <begin position="260"/>
        <end position="262"/>
    </location>
</feature>
<feature type="helix" evidence="6">
    <location>
        <begin position="266"/>
        <end position="273"/>
    </location>
</feature>
<feature type="helix" evidence="6">
    <location>
        <begin position="275"/>
        <end position="279"/>
    </location>
</feature>
<feature type="strand" evidence="6">
    <location>
        <begin position="282"/>
        <end position="284"/>
    </location>
</feature>
<feature type="strand" evidence="6">
    <location>
        <begin position="287"/>
        <end position="291"/>
    </location>
</feature>
<feature type="helix" evidence="6">
    <location>
        <begin position="292"/>
        <end position="299"/>
    </location>
</feature>
<feature type="helix" evidence="6">
    <location>
        <begin position="304"/>
        <end position="325"/>
    </location>
</feature>
<feature type="helix" evidence="6">
    <location>
        <begin position="329"/>
        <end position="331"/>
    </location>
</feature>
<feature type="helix" evidence="6">
    <location>
        <begin position="332"/>
        <end position="340"/>
    </location>
</feature>
<reference key="1">
    <citation type="journal article" date="2004" name="Science">
        <title>The 1.2-megabase genome sequence of Mimivirus.</title>
        <authorList>
            <person name="Raoult D."/>
            <person name="Audic S."/>
            <person name="Robert C."/>
            <person name="Abergel C."/>
            <person name="Renesto P."/>
            <person name="Ogata H."/>
            <person name="La Scola B."/>
            <person name="Susan M."/>
            <person name="Claverie J.-M."/>
        </authorList>
    </citation>
    <scope>NUCLEOTIDE SEQUENCE [LARGE SCALE GENOMIC DNA]</scope>
    <scope>FUNCTION</scope>
    <source>
        <strain>Rowbotham-Bradford</strain>
    </source>
</reference>
<reference key="2">
    <citation type="journal article" date="2005" name="Acta Crystallogr. F">
        <title>Mimivirus TyrRS: preliminary structural and functional characterization of the first amino-acyl tRNA synthetase found in a virus.</title>
        <authorList>
            <person name="Abergel C."/>
            <person name="Chenivesse S."/>
            <person name="Byrne D."/>
            <person name="Suhre K."/>
            <person name="Arondel V."/>
            <person name="Claverie J.-M."/>
        </authorList>
    </citation>
    <scope>CRYSTALLIZATION</scope>
    <scope>FUNCTION</scope>
</reference>
<reference key="3">
    <citation type="journal article" date="2007" name="J. Virol.">
        <title>Virus-encoded aminoacyl-tRNA synthetases: structural and functional characterization of Mimivirus TyrRS and MetRS.</title>
        <authorList>
            <person name="Abergel C."/>
            <person name="Rudinger-Thirion J."/>
            <person name="Giege R."/>
            <person name="Claverie J.-M."/>
        </authorList>
    </citation>
    <scope>X-RAY CRYSTALLOGRAPHY (2.2 ANGSTROMS)</scope>
    <scope>SUBUNIT</scope>
    <scope>CATALYTIC ACTIVITY</scope>
    <scope>KINETIC PARAMETERS</scope>
</reference>
<name>SYY_MIMIV</name>
<organismHost>
    <name type="scientific">Acanthamoeba polyphaga</name>
    <name type="common">Amoeba</name>
    <dbReference type="NCBI Taxonomy" id="5757"/>
</organismHost>
<accession>Q5UPJ7</accession>
<organism>
    <name type="scientific">Acanthamoeba polyphaga mimivirus</name>
    <name type="common">APMV</name>
    <dbReference type="NCBI Taxonomy" id="212035"/>
    <lineage>
        <taxon>Viruses</taxon>
        <taxon>Varidnaviria</taxon>
        <taxon>Bamfordvirae</taxon>
        <taxon>Nucleocytoviricota</taxon>
        <taxon>Megaviricetes</taxon>
        <taxon>Imitervirales</taxon>
        <taxon>Mimiviridae</taxon>
        <taxon>Megamimivirinae</taxon>
        <taxon>Mimivirus</taxon>
        <taxon>Mimivirus bradfordmassiliense</taxon>
    </lineage>
</organism>
<sequence>MENTDHTNNEHRLTQLLSIAEECETLDRLKQLVDSGRIFTAYNGFEPSGRIHIAQALITVMNTNNIIECGGQMIIYIADWFAKMNLKMNGDINKIRELGRYFIEVFKACGINLDGTRFIWASEFIASNPSYIERMLDIAEFSTISRVKRCCQIMGRNESDCLKASQIFYPCMQAADVFELVPEGIDICQLGIDQRKVNMLAIEYANDRGLKIPISLSHHMLMSLSGPKKKMSKSDPQGAIFMDDTEQEVSEKISRAYCTDETFDNPIFEYIKYLLLRWFGTLNLCGKIYTDIESIQEDFSSMNKRELKTDVANYINTIIDLVREHFKKPELSELLSNVKSYQQPSK</sequence>
<proteinExistence type="evidence at protein level"/>